<name>RL33_METRJ</name>
<organism>
    <name type="scientific">Methylobacterium radiotolerans (strain ATCC 27329 / DSM 1819 / JCM 2831 / NBRC 15690 / NCIMB 10815 / 0-1)</name>
    <dbReference type="NCBI Taxonomy" id="426355"/>
    <lineage>
        <taxon>Bacteria</taxon>
        <taxon>Pseudomonadati</taxon>
        <taxon>Pseudomonadota</taxon>
        <taxon>Alphaproteobacteria</taxon>
        <taxon>Hyphomicrobiales</taxon>
        <taxon>Methylobacteriaceae</taxon>
        <taxon>Methylobacterium</taxon>
    </lineage>
</organism>
<keyword id="KW-0687">Ribonucleoprotein</keyword>
<keyword id="KW-0689">Ribosomal protein</keyword>
<comment type="similarity">
    <text evidence="1">Belongs to the bacterial ribosomal protein bL33 family.</text>
</comment>
<reference key="1">
    <citation type="submission" date="2008-03" db="EMBL/GenBank/DDBJ databases">
        <title>Complete sequence of chromosome of Methylobacterium radiotolerans JCM 2831.</title>
        <authorList>
            <consortium name="US DOE Joint Genome Institute"/>
            <person name="Copeland A."/>
            <person name="Lucas S."/>
            <person name="Lapidus A."/>
            <person name="Glavina del Rio T."/>
            <person name="Dalin E."/>
            <person name="Tice H."/>
            <person name="Bruce D."/>
            <person name="Goodwin L."/>
            <person name="Pitluck S."/>
            <person name="Kiss H."/>
            <person name="Brettin T."/>
            <person name="Detter J.C."/>
            <person name="Han C."/>
            <person name="Kuske C.R."/>
            <person name="Schmutz J."/>
            <person name="Larimer F."/>
            <person name="Land M."/>
            <person name="Hauser L."/>
            <person name="Kyrpides N."/>
            <person name="Mikhailova N."/>
            <person name="Marx C.J."/>
            <person name="Richardson P."/>
        </authorList>
    </citation>
    <scope>NUCLEOTIDE SEQUENCE [LARGE SCALE GENOMIC DNA]</scope>
    <source>
        <strain>ATCC 27329 / DSM 1819 / JCM 2831 / NBRC 15690 / NCIMB 10815 / 0-1</strain>
    </source>
</reference>
<sequence length="55" mass="6409">MAKAVTVKIKLVSTADTGYFYVTKKNSRTQTEKLTMRKYDPVARKHVEFKETKIK</sequence>
<dbReference type="EMBL" id="CP001001">
    <property type="protein sequence ID" value="ACB25552.1"/>
    <property type="molecule type" value="Genomic_DNA"/>
</dbReference>
<dbReference type="RefSeq" id="WP_012320513.1">
    <property type="nucleotide sequence ID" value="NC_010505.1"/>
</dbReference>
<dbReference type="SMR" id="B1LUW6"/>
<dbReference type="STRING" id="426355.Mrad2831_3576"/>
<dbReference type="GeneID" id="6139629"/>
<dbReference type="KEGG" id="mrd:Mrad2831_3576"/>
<dbReference type="eggNOG" id="COG0267">
    <property type="taxonomic scope" value="Bacteria"/>
</dbReference>
<dbReference type="HOGENOM" id="CLU_190949_1_1_5"/>
<dbReference type="OrthoDB" id="21586at2"/>
<dbReference type="Proteomes" id="UP000006589">
    <property type="component" value="Chromosome"/>
</dbReference>
<dbReference type="GO" id="GO:0022625">
    <property type="term" value="C:cytosolic large ribosomal subunit"/>
    <property type="evidence" value="ECO:0007669"/>
    <property type="project" value="TreeGrafter"/>
</dbReference>
<dbReference type="GO" id="GO:0003735">
    <property type="term" value="F:structural constituent of ribosome"/>
    <property type="evidence" value="ECO:0007669"/>
    <property type="project" value="InterPro"/>
</dbReference>
<dbReference type="GO" id="GO:0006412">
    <property type="term" value="P:translation"/>
    <property type="evidence" value="ECO:0007669"/>
    <property type="project" value="UniProtKB-UniRule"/>
</dbReference>
<dbReference type="Gene3D" id="2.20.28.120">
    <property type="entry name" value="Ribosomal protein L33"/>
    <property type="match status" value="1"/>
</dbReference>
<dbReference type="HAMAP" id="MF_00294">
    <property type="entry name" value="Ribosomal_bL33"/>
    <property type="match status" value="1"/>
</dbReference>
<dbReference type="InterPro" id="IPR001705">
    <property type="entry name" value="Ribosomal_bL33"/>
</dbReference>
<dbReference type="InterPro" id="IPR018264">
    <property type="entry name" value="Ribosomal_bL33_CS"/>
</dbReference>
<dbReference type="InterPro" id="IPR038584">
    <property type="entry name" value="Ribosomal_bL33_sf"/>
</dbReference>
<dbReference type="InterPro" id="IPR011332">
    <property type="entry name" value="Ribosomal_zn-bd"/>
</dbReference>
<dbReference type="NCBIfam" id="NF001860">
    <property type="entry name" value="PRK00595.1"/>
    <property type="match status" value="1"/>
</dbReference>
<dbReference type="NCBIfam" id="TIGR01023">
    <property type="entry name" value="rpmG_bact"/>
    <property type="match status" value="1"/>
</dbReference>
<dbReference type="PANTHER" id="PTHR15238">
    <property type="entry name" value="54S RIBOSOMAL PROTEIN L39, MITOCHONDRIAL"/>
    <property type="match status" value="1"/>
</dbReference>
<dbReference type="PANTHER" id="PTHR15238:SF1">
    <property type="entry name" value="LARGE RIBOSOMAL SUBUNIT PROTEIN BL33M"/>
    <property type="match status" value="1"/>
</dbReference>
<dbReference type="Pfam" id="PF00471">
    <property type="entry name" value="Ribosomal_L33"/>
    <property type="match status" value="1"/>
</dbReference>
<dbReference type="SUPFAM" id="SSF57829">
    <property type="entry name" value="Zn-binding ribosomal proteins"/>
    <property type="match status" value="1"/>
</dbReference>
<dbReference type="PROSITE" id="PS00582">
    <property type="entry name" value="RIBOSOMAL_L33"/>
    <property type="match status" value="1"/>
</dbReference>
<protein>
    <recommendedName>
        <fullName evidence="1">Large ribosomal subunit protein bL33</fullName>
    </recommendedName>
    <alternativeName>
        <fullName evidence="2">50S ribosomal protein L33</fullName>
    </alternativeName>
</protein>
<gene>
    <name evidence="1" type="primary">rpmG</name>
    <name type="ordered locus">Mrad2831_3576</name>
</gene>
<feature type="chain" id="PRO_1000115141" description="Large ribosomal subunit protein bL33">
    <location>
        <begin position="1"/>
        <end position="55"/>
    </location>
</feature>
<proteinExistence type="inferred from homology"/>
<evidence type="ECO:0000255" key="1">
    <source>
        <dbReference type="HAMAP-Rule" id="MF_00294"/>
    </source>
</evidence>
<evidence type="ECO:0000305" key="2"/>
<accession>B1LUW6</accession>